<evidence type="ECO:0000255" key="1">
    <source>
        <dbReference type="HAMAP-Rule" id="MF_00149"/>
    </source>
</evidence>
<evidence type="ECO:0000256" key="2">
    <source>
        <dbReference type="SAM" id="MobiDB-lite"/>
    </source>
</evidence>
<name>MUTL_GEOSW</name>
<protein>
    <recommendedName>
        <fullName evidence="1">DNA mismatch repair protein MutL</fullName>
    </recommendedName>
</protein>
<reference key="1">
    <citation type="submission" date="2009-06" db="EMBL/GenBank/DDBJ databases">
        <title>Complete sequence of chromosome of Geopacillus sp. WCH70.</title>
        <authorList>
            <consortium name="US DOE Joint Genome Institute"/>
            <person name="Lucas S."/>
            <person name="Copeland A."/>
            <person name="Lapidus A."/>
            <person name="Glavina del Rio T."/>
            <person name="Dalin E."/>
            <person name="Tice H."/>
            <person name="Bruce D."/>
            <person name="Goodwin L."/>
            <person name="Pitluck S."/>
            <person name="Chertkov O."/>
            <person name="Brettin T."/>
            <person name="Detter J.C."/>
            <person name="Han C."/>
            <person name="Larimer F."/>
            <person name="Land M."/>
            <person name="Hauser L."/>
            <person name="Kyrpides N."/>
            <person name="Mikhailova N."/>
            <person name="Brumm P."/>
            <person name="Mead D.A."/>
            <person name="Richardson P."/>
        </authorList>
    </citation>
    <scope>NUCLEOTIDE SEQUENCE [LARGE SCALE GENOMIC DNA]</scope>
    <source>
        <strain>WCH70</strain>
    </source>
</reference>
<keyword id="KW-0227">DNA damage</keyword>
<keyword id="KW-0234">DNA repair</keyword>
<gene>
    <name evidence="1" type="primary">mutL</name>
    <name type="ordered locus">GWCH70_1203</name>
</gene>
<feature type="chain" id="PRO_1000203390" description="DNA mismatch repair protein MutL">
    <location>
        <begin position="1"/>
        <end position="619"/>
    </location>
</feature>
<feature type="region of interest" description="Disordered" evidence="2">
    <location>
        <begin position="368"/>
        <end position="403"/>
    </location>
</feature>
<feature type="compositionally biased region" description="Basic and acidic residues" evidence="2">
    <location>
        <begin position="368"/>
        <end position="378"/>
    </location>
</feature>
<comment type="function">
    <text evidence="1">This protein is involved in the repair of mismatches in DNA. It is required for dam-dependent methyl-directed DNA mismatch repair. May act as a 'molecular matchmaker', a protein that promotes the formation of a stable complex between two or more DNA-binding proteins in an ATP-dependent manner without itself being part of a final effector complex.</text>
</comment>
<comment type="similarity">
    <text evidence="1">Belongs to the DNA mismatch repair MutL/HexB family.</text>
</comment>
<organism>
    <name type="scientific">Geobacillus sp. (strain WCH70)</name>
    <dbReference type="NCBI Taxonomy" id="471223"/>
    <lineage>
        <taxon>Bacteria</taxon>
        <taxon>Bacillati</taxon>
        <taxon>Bacillota</taxon>
        <taxon>Bacilli</taxon>
        <taxon>Bacillales</taxon>
        <taxon>Anoxybacillaceae</taxon>
        <taxon>Geobacillus</taxon>
    </lineage>
</organism>
<dbReference type="EMBL" id="CP001638">
    <property type="protein sequence ID" value="ACS24062.1"/>
    <property type="molecule type" value="Genomic_DNA"/>
</dbReference>
<dbReference type="SMR" id="C5D9H6"/>
<dbReference type="STRING" id="471223.GWCH70_1203"/>
<dbReference type="KEGG" id="gwc:GWCH70_1203"/>
<dbReference type="eggNOG" id="COG0323">
    <property type="taxonomic scope" value="Bacteria"/>
</dbReference>
<dbReference type="HOGENOM" id="CLU_004131_4_1_9"/>
<dbReference type="OrthoDB" id="9763467at2"/>
<dbReference type="GO" id="GO:0032300">
    <property type="term" value="C:mismatch repair complex"/>
    <property type="evidence" value="ECO:0007669"/>
    <property type="project" value="InterPro"/>
</dbReference>
<dbReference type="GO" id="GO:0005524">
    <property type="term" value="F:ATP binding"/>
    <property type="evidence" value="ECO:0007669"/>
    <property type="project" value="InterPro"/>
</dbReference>
<dbReference type="GO" id="GO:0016887">
    <property type="term" value="F:ATP hydrolysis activity"/>
    <property type="evidence" value="ECO:0007669"/>
    <property type="project" value="InterPro"/>
</dbReference>
<dbReference type="GO" id="GO:0140664">
    <property type="term" value="F:ATP-dependent DNA damage sensor activity"/>
    <property type="evidence" value="ECO:0007669"/>
    <property type="project" value="InterPro"/>
</dbReference>
<dbReference type="GO" id="GO:0030983">
    <property type="term" value="F:mismatched DNA binding"/>
    <property type="evidence" value="ECO:0007669"/>
    <property type="project" value="InterPro"/>
</dbReference>
<dbReference type="GO" id="GO:0006298">
    <property type="term" value="P:mismatch repair"/>
    <property type="evidence" value="ECO:0007669"/>
    <property type="project" value="UniProtKB-UniRule"/>
</dbReference>
<dbReference type="CDD" id="cd16926">
    <property type="entry name" value="HATPase_MutL-MLH-PMS-like"/>
    <property type="match status" value="1"/>
</dbReference>
<dbReference type="CDD" id="cd00782">
    <property type="entry name" value="MutL_Trans"/>
    <property type="match status" value="1"/>
</dbReference>
<dbReference type="FunFam" id="3.30.1370.100:FF:000004">
    <property type="entry name" value="DNA mismatch repair endonuclease MutL"/>
    <property type="match status" value="1"/>
</dbReference>
<dbReference type="FunFam" id="3.30.565.10:FF:000003">
    <property type="entry name" value="DNA mismatch repair endonuclease MutL"/>
    <property type="match status" value="1"/>
</dbReference>
<dbReference type="Gene3D" id="3.30.230.10">
    <property type="match status" value="1"/>
</dbReference>
<dbReference type="Gene3D" id="3.30.565.10">
    <property type="entry name" value="Histidine kinase-like ATPase, C-terminal domain"/>
    <property type="match status" value="1"/>
</dbReference>
<dbReference type="Gene3D" id="3.30.1540.20">
    <property type="entry name" value="MutL, C-terminal domain, dimerisation subdomain"/>
    <property type="match status" value="1"/>
</dbReference>
<dbReference type="Gene3D" id="3.30.1370.100">
    <property type="entry name" value="MutL, C-terminal domain, regulatory subdomain"/>
    <property type="match status" value="1"/>
</dbReference>
<dbReference type="HAMAP" id="MF_00149">
    <property type="entry name" value="DNA_mis_repair"/>
    <property type="match status" value="1"/>
</dbReference>
<dbReference type="InterPro" id="IPR014762">
    <property type="entry name" value="DNA_mismatch_repair_CS"/>
</dbReference>
<dbReference type="InterPro" id="IPR020667">
    <property type="entry name" value="DNA_mismatch_repair_MutL"/>
</dbReference>
<dbReference type="InterPro" id="IPR013507">
    <property type="entry name" value="DNA_mismatch_S5_2-like"/>
</dbReference>
<dbReference type="InterPro" id="IPR036890">
    <property type="entry name" value="HATPase_C_sf"/>
</dbReference>
<dbReference type="InterPro" id="IPR002099">
    <property type="entry name" value="MutL/Mlh/PMS"/>
</dbReference>
<dbReference type="InterPro" id="IPR038973">
    <property type="entry name" value="MutL/Mlh/Pms-like"/>
</dbReference>
<dbReference type="InterPro" id="IPR014790">
    <property type="entry name" value="MutL_C"/>
</dbReference>
<dbReference type="InterPro" id="IPR042120">
    <property type="entry name" value="MutL_C_dimsub"/>
</dbReference>
<dbReference type="InterPro" id="IPR042121">
    <property type="entry name" value="MutL_C_regsub"/>
</dbReference>
<dbReference type="InterPro" id="IPR037198">
    <property type="entry name" value="MutL_C_sf"/>
</dbReference>
<dbReference type="InterPro" id="IPR020568">
    <property type="entry name" value="Ribosomal_Su5_D2-typ_SF"/>
</dbReference>
<dbReference type="InterPro" id="IPR014721">
    <property type="entry name" value="Ribsml_uS5_D2-typ_fold_subgr"/>
</dbReference>
<dbReference type="NCBIfam" id="TIGR00585">
    <property type="entry name" value="mutl"/>
    <property type="match status" value="1"/>
</dbReference>
<dbReference type="NCBIfam" id="NF000950">
    <property type="entry name" value="PRK00095.1-3"/>
    <property type="match status" value="1"/>
</dbReference>
<dbReference type="PANTHER" id="PTHR10073">
    <property type="entry name" value="DNA MISMATCH REPAIR PROTEIN MLH, PMS, MUTL"/>
    <property type="match status" value="1"/>
</dbReference>
<dbReference type="PANTHER" id="PTHR10073:SF12">
    <property type="entry name" value="DNA MISMATCH REPAIR PROTEIN MLH1"/>
    <property type="match status" value="1"/>
</dbReference>
<dbReference type="Pfam" id="PF01119">
    <property type="entry name" value="DNA_mis_repair"/>
    <property type="match status" value="1"/>
</dbReference>
<dbReference type="Pfam" id="PF13589">
    <property type="entry name" value="HATPase_c_3"/>
    <property type="match status" value="1"/>
</dbReference>
<dbReference type="Pfam" id="PF08676">
    <property type="entry name" value="MutL_C"/>
    <property type="match status" value="1"/>
</dbReference>
<dbReference type="SMART" id="SM01340">
    <property type="entry name" value="DNA_mis_repair"/>
    <property type="match status" value="1"/>
</dbReference>
<dbReference type="SMART" id="SM00853">
    <property type="entry name" value="MutL_C"/>
    <property type="match status" value="1"/>
</dbReference>
<dbReference type="SUPFAM" id="SSF55874">
    <property type="entry name" value="ATPase domain of HSP90 chaperone/DNA topoisomerase II/histidine kinase"/>
    <property type="match status" value="1"/>
</dbReference>
<dbReference type="SUPFAM" id="SSF118116">
    <property type="entry name" value="DNA mismatch repair protein MutL"/>
    <property type="match status" value="1"/>
</dbReference>
<dbReference type="SUPFAM" id="SSF54211">
    <property type="entry name" value="Ribosomal protein S5 domain 2-like"/>
    <property type="match status" value="1"/>
</dbReference>
<dbReference type="PROSITE" id="PS00058">
    <property type="entry name" value="DNA_MISMATCH_REPAIR_1"/>
    <property type="match status" value="1"/>
</dbReference>
<accession>C5D9H6</accession>
<proteinExistence type="inferred from homology"/>
<sequence>MGKIRKLDDQLSNKIAAGEVVERPASVVKELVENAVDANSTIIEIELEEAGLTKIRVIDNGDGMEEDDCLVAFERHATSKIKDEHDLFRIRTLGFRGEALPSIASVSEVEMKTSTGDGPGTKVVLKGGKLVVHERTTSRKGTDITVSNLFFNTPARLKYMKTIHTELGHVTDVVNRLAMAHPDISFRLRHHGKQLLYTSGNGDVRHVLAAIYGMDVAKKMIPIQAESLDFTVQGYISLPEVTRASRNYISTIVNGRYVRNIPLAKAIEAGYHTLLPIGRYPIVFLSIAMDPILVDVNVHPAKLEVRFSKEAELNELVTQAIRQALQARTLIPEMMIKQKETPKPKAEQTAWTFEHVVKEPFVSPLVHVDEPKQVDEPKQSSPVQEPKEEIPSFLPTVESKQNDVDDELVEMDEQTESSDEQEHVNDRLPPLYPIGQMHGTYILAQNERGLYIIDQHAAQERIKYEYFREKVGEVINEVQELLVPLTFHYPTDEYVLIDAHREELAKCGVFLEPFGHNTFIVRSHPSWFPKGEEAEIIEEMIQQVIDMKKVDMKQLREKAAILMSCKRSIKANEYLRDDEIFALLESLRKTTDPFTCPHGRPIIIHFSTYELEKMFKRVM</sequence>